<dbReference type="EC" id="2.7.7.6" evidence="1"/>
<dbReference type="EMBL" id="CP000924">
    <property type="protein sequence ID" value="ABY94036.1"/>
    <property type="molecule type" value="Genomic_DNA"/>
</dbReference>
<dbReference type="RefSeq" id="WP_004402357.1">
    <property type="nucleotide sequence ID" value="NC_010321.1"/>
</dbReference>
<dbReference type="SMR" id="B0KCJ3"/>
<dbReference type="STRING" id="340099.Teth39_0367"/>
<dbReference type="KEGG" id="tpd:Teth39_0367"/>
<dbReference type="eggNOG" id="COG0086">
    <property type="taxonomic scope" value="Bacteria"/>
</dbReference>
<dbReference type="HOGENOM" id="CLU_000524_3_1_9"/>
<dbReference type="Proteomes" id="UP000002156">
    <property type="component" value="Chromosome"/>
</dbReference>
<dbReference type="GO" id="GO:0000428">
    <property type="term" value="C:DNA-directed RNA polymerase complex"/>
    <property type="evidence" value="ECO:0007669"/>
    <property type="project" value="UniProtKB-KW"/>
</dbReference>
<dbReference type="GO" id="GO:0003677">
    <property type="term" value="F:DNA binding"/>
    <property type="evidence" value="ECO:0007669"/>
    <property type="project" value="UniProtKB-UniRule"/>
</dbReference>
<dbReference type="GO" id="GO:0003899">
    <property type="term" value="F:DNA-directed RNA polymerase activity"/>
    <property type="evidence" value="ECO:0007669"/>
    <property type="project" value="UniProtKB-UniRule"/>
</dbReference>
<dbReference type="GO" id="GO:0000287">
    <property type="term" value="F:magnesium ion binding"/>
    <property type="evidence" value="ECO:0007669"/>
    <property type="project" value="UniProtKB-UniRule"/>
</dbReference>
<dbReference type="GO" id="GO:0008270">
    <property type="term" value="F:zinc ion binding"/>
    <property type="evidence" value="ECO:0007669"/>
    <property type="project" value="UniProtKB-UniRule"/>
</dbReference>
<dbReference type="GO" id="GO:0006351">
    <property type="term" value="P:DNA-templated transcription"/>
    <property type="evidence" value="ECO:0007669"/>
    <property type="project" value="UniProtKB-UniRule"/>
</dbReference>
<dbReference type="CDD" id="cd02655">
    <property type="entry name" value="RNAP_beta'_C"/>
    <property type="match status" value="1"/>
</dbReference>
<dbReference type="CDD" id="cd01609">
    <property type="entry name" value="RNAP_beta'_N"/>
    <property type="match status" value="1"/>
</dbReference>
<dbReference type="FunFam" id="1.10.150.390:FF:000002">
    <property type="entry name" value="DNA-directed RNA polymerase subunit beta"/>
    <property type="match status" value="1"/>
</dbReference>
<dbReference type="FunFam" id="1.10.40.90:FF:000001">
    <property type="entry name" value="DNA-directed RNA polymerase subunit beta"/>
    <property type="match status" value="1"/>
</dbReference>
<dbReference type="FunFam" id="4.10.860.120:FF:000001">
    <property type="entry name" value="DNA-directed RNA polymerase subunit beta"/>
    <property type="match status" value="1"/>
</dbReference>
<dbReference type="Gene3D" id="1.10.132.30">
    <property type="match status" value="1"/>
</dbReference>
<dbReference type="Gene3D" id="1.10.150.390">
    <property type="match status" value="1"/>
</dbReference>
<dbReference type="Gene3D" id="1.10.1790.20">
    <property type="match status" value="1"/>
</dbReference>
<dbReference type="Gene3D" id="1.10.40.90">
    <property type="match status" value="1"/>
</dbReference>
<dbReference type="Gene3D" id="2.40.40.20">
    <property type="match status" value="1"/>
</dbReference>
<dbReference type="Gene3D" id="2.40.50.100">
    <property type="match status" value="1"/>
</dbReference>
<dbReference type="Gene3D" id="4.10.860.120">
    <property type="entry name" value="RNA polymerase II, clamp domain"/>
    <property type="match status" value="1"/>
</dbReference>
<dbReference type="Gene3D" id="1.10.274.100">
    <property type="entry name" value="RNA polymerase Rpb1, domain 3"/>
    <property type="match status" value="2"/>
</dbReference>
<dbReference type="HAMAP" id="MF_01322">
    <property type="entry name" value="RNApol_bact_RpoC"/>
    <property type="match status" value="1"/>
</dbReference>
<dbReference type="InterPro" id="IPR045867">
    <property type="entry name" value="DNA-dir_RpoC_beta_prime"/>
</dbReference>
<dbReference type="InterPro" id="IPR012754">
    <property type="entry name" value="DNA-dir_RpoC_beta_prime_bact"/>
</dbReference>
<dbReference type="InterPro" id="IPR000722">
    <property type="entry name" value="RNA_pol_asu"/>
</dbReference>
<dbReference type="InterPro" id="IPR006592">
    <property type="entry name" value="RNA_pol_N"/>
</dbReference>
<dbReference type="InterPro" id="IPR007080">
    <property type="entry name" value="RNA_pol_Rpb1_1"/>
</dbReference>
<dbReference type="InterPro" id="IPR007066">
    <property type="entry name" value="RNA_pol_Rpb1_3"/>
</dbReference>
<dbReference type="InterPro" id="IPR042102">
    <property type="entry name" value="RNA_pol_Rpb1_3_sf"/>
</dbReference>
<dbReference type="InterPro" id="IPR007083">
    <property type="entry name" value="RNA_pol_Rpb1_4"/>
</dbReference>
<dbReference type="InterPro" id="IPR007081">
    <property type="entry name" value="RNA_pol_Rpb1_5"/>
</dbReference>
<dbReference type="InterPro" id="IPR044893">
    <property type="entry name" value="RNA_pol_Rpb1_clamp_domain"/>
</dbReference>
<dbReference type="InterPro" id="IPR038120">
    <property type="entry name" value="Rpb1_funnel_sf"/>
</dbReference>
<dbReference type="NCBIfam" id="NF011498">
    <property type="entry name" value="PRK14906.1"/>
    <property type="match status" value="1"/>
</dbReference>
<dbReference type="NCBIfam" id="TIGR02386">
    <property type="entry name" value="rpoC_TIGR"/>
    <property type="match status" value="1"/>
</dbReference>
<dbReference type="PANTHER" id="PTHR19376">
    <property type="entry name" value="DNA-DIRECTED RNA POLYMERASE"/>
    <property type="match status" value="1"/>
</dbReference>
<dbReference type="PANTHER" id="PTHR19376:SF54">
    <property type="entry name" value="DNA-DIRECTED RNA POLYMERASE SUBUNIT BETA"/>
    <property type="match status" value="1"/>
</dbReference>
<dbReference type="Pfam" id="PF04997">
    <property type="entry name" value="RNA_pol_Rpb1_1"/>
    <property type="match status" value="1"/>
</dbReference>
<dbReference type="Pfam" id="PF00623">
    <property type="entry name" value="RNA_pol_Rpb1_2"/>
    <property type="match status" value="2"/>
</dbReference>
<dbReference type="Pfam" id="PF04983">
    <property type="entry name" value="RNA_pol_Rpb1_3"/>
    <property type="match status" value="1"/>
</dbReference>
<dbReference type="Pfam" id="PF05000">
    <property type="entry name" value="RNA_pol_Rpb1_4"/>
    <property type="match status" value="1"/>
</dbReference>
<dbReference type="Pfam" id="PF04998">
    <property type="entry name" value="RNA_pol_Rpb1_5"/>
    <property type="match status" value="1"/>
</dbReference>
<dbReference type="SMART" id="SM00663">
    <property type="entry name" value="RPOLA_N"/>
    <property type="match status" value="1"/>
</dbReference>
<dbReference type="SUPFAM" id="SSF64484">
    <property type="entry name" value="beta and beta-prime subunits of DNA dependent RNA-polymerase"/>
    <property type="match status" value="1"/>
</dbReference>
<name>RPOC_THEP3</name>
<protein>
    <recommendedName>
        <fullName evidence="1">DNA-directed RNA polymerase subunit beta'</fullName>
        <shortName evidence="1">RNAP subunit beta'</shortName>
        <ecNumber evidence="1">2.7.7.6</ecNumber>
    </recommendedName>
    <alternativeName>
        <fullName evidence="1">RNA polymerase subunit beta'</fullName>
    </alternativeName>
    <alternativeName>
        <fullName evidence="1">Transcriptase subunit beta'</fullName>
    </alternativeName>
</protein>
<accession>B0KCJ3</accession>
<keyword id="KW-0240">DNA-directed RNA polymerase</keyword>
<keyword id="KW-0460">Magnesium</keyword>
<keyword id="KW-0479">Metal-binding</keyword>
<keyword id="KW-0548">Nucleotidyltransferase</keyword>
<keyword id="KW-1185">Reference proteome</keyword>
<keyword id="KW-0804">Transcription</keyword>
<keyword id="KW-0808">Transferase</keyword>
<keyword id="KW-0862">Zinc</keyword>
<reference key="1">
    <citation type="submission" date="2008-01" db="EMBL/GenBank/DDBJ databases">
        <title>Complete sequence of Thermoanaerobacter pseudethanolicus 39E.</title>
        <authorList>
            <person name="Copeland A."/>
            <person name="Lucas S."/>
            <person name="Lapidus A."/>
            <person name="Barry K."/>
            <person name="Glavina del Rio T."/>
            <person name="Dalin E."/>
            <person name="Tice H."/>
            <person name="Pitluck S."/>
            <person name="Bruce D."/>
            <person name="Goodwin L."/>
            <person name="Saunders E."/>
            <person name="Brettin T."/>
            <person name="Detter J.C."/>
            <person name="Han C."/>
            <person name="Schmutz J."/>
            <person name="Larimer F."/>
            <person name="Land M."/>
            <person name="Hauser L."/>
            <person name="Kyrpides N."/>
            <person name="Lykidis A."/>
            <person name="Hemme C."/>
            <person name="Fields M.W."/>
            <person name="He Z."/>
            <person name="Zhou J."/>
            <person name="Richardson P."/>
        </authorList>
    </citation>
    <scope>NUCLEOTIDE SEQUENCE [LARGE SCALE GENOMIC DNA]</scope>
    <source>
        <strain>ATCC 33223 / DSM 2355 / 39E</strain>
    </source>
</reference>
<proteinExistence type="inferred from homology"/>
<comment type="function">
    <text evidence="1">DNA-dependent RNA polymerase catalyzes the transcription of DNA into RNA using the four ribonucleoside triphosphates as substrates.</text>
</comment>
<comment type="catalytic activity">
    <reaction evidence="1">
        <text>RNA(n) + a ribonucleoside 5'-triphosphate = RNA(n+1) + diphosphate</text>
        <dbReference type="Rhea" id="RHEA:21248"/>
        <dbReference type="Rhea" id="RHEA-COMP:14527"/>
        <dbReference type="Rhea" id="RHEA-COMP:17342"/>
        <dbReference type="ChEBI" id="CHEBI:33019"/>
        <dbReference type="ChEBI" id="CHEBI:61557"/>
        <dbReference type="ChEBI" id="CHEBI:140395"/>
        <dbReference type="EC" id="2.7.7.6"/>
    </reaction>
</comment>
<comment type="cofactor">
    <cofactor evidence="1">
        <name>Mg(2+)</name>
        <dbReference type="ChEBI" id="CHEBI:18420"/>
    </cofactor>
    <text evidence="1">Binds 1 Mg(2+) ion per subunit.</text>
</comment>
<comment type="cofactor">
    <cofactor evidence="1">
        <name>Zn(2+)</name>
        <dbReference type="ChEBI" id="CHEBI:29105"/>
    </cofactor>
    <text evidence="1">Binds 2 Zn(2+) ions per subunit.</text>
</comment>
<comment type="subunit">
    <text evidence="1">The RNAP catalytic core consists of 2 alpha, 1 beta, 1 beta' and 1 omega subunit. When a sigma factor is associated with the core the holoenzyme is formed, which can initiate transcription.</text>
</comment>
<comment type="similarity">
    <text evidence="1">Belongs to the RNA polymerase beta' chain family.</text>
</comment>
<organism>
    <name type="scientific">Thermoanaerobacter pseudethanolicus (strain ATCC 33223 / 39E)</name>
    <name type="common">Clostridium thermohydrosulfuricum</name>
    <dbReference type="NCBI Taxonomy" id="340099"/>
    <lineage>
        <taxon>Bacteria</taxon>
        <taxon>Bacillati</taxon>
        <taxon>Bacillota</taxon>
        <taxon>Clostridia</taxon>
        <taxon>Thermoanaerobacterales</taxon>
        <taxon>Thermoanaerobacteraceae</taxon>
        <taxon>Thermoanaerobacter</taxon>
    </lineage>
</organism>
<evidence type="ECO:0000255" key="1">
    <source>
        <dbReference type="HAMAP-Rule" id="MF_01322"/>
    </source>
</evidence>
<evidence type="ECO:0000256" key="2">
    <source>
        <dbReference type="SAM" id="MobiDB-lite"/>
    </source>
</evidence>
<feature type="chain" id="PRO_0000353446" description="DNA-directed RNA polymerase subunit beta'">
    <location>
        <begin position="1"/>
        <end position="1184"/>
    </location>
</feature>
<feature type="region of interest" description="Disordered" evidence="2">
    <location>
        <begin position="1165"/>
        <end position="1184"/>
    </location>
</feature>
<feature type="binding site" evidence="1">
    <location>
        <position position="60"/>
    </location>
    <ligand>
        <name>Zn(2+)</name>
        <dbReference type="ChEBI" id="CHEBI:29105"/>
        <label>1</label>
    </ligand>
</feature>
<feature type="binding site" evidence="1">
    <location>
        <position position="62"/>
    </location>
    <ligand>
        <name>Zn(2+)</name>
        <dbReference type="ChEBI" id="CHEBI:29105"/>
        <label>1</label>
    </ligand>
</feature>
<feature type="binding site" evidence="1">
    <location>
        <position position="75"/>
    </location>
    <ligand>
        <name>Zn(2+)</name>
        <dbReference type="ChEBI" id="CHEBI:29105"/>
        <label>1</label>
    </ligand>
</feature>
<feature type="binding site" evidence="1">
    <location>
        <position position="78"/>
    </location>
    <ligand>
        <name>Zn(2+)</name>
        <dbReference type="ChEBI" id="CHEBI:29105"/>
        <label>1</label>
    </ligand>
</feature>
<feature type="binding site" evidence="1">
    <location>
        <position position="449"/>
    </location>
    <ligand>
        <name>Mg(2+)</name>
        <dbReference type="ChEBI" id="CHEBI:18420"/>
    </ligand>
</feature>
<feature type="binding site" evidence="1">
    <location>
        <position position="451"/>
    </location>
    <ligand>
        <name>Mg(2+)</name>
        <dbReference type="ChEBI" id="CHEBI:18420"/>
    </ligand>
</feature>
<feature type="binding site" evidence="1">
    <location>
        <position position="453"/>
    </location>
    <ligand>
        <name>Mg(2+)</name>
        <dbReference type="ChEBI" id="CHEBI:18420"/>
    </ligand>
</feature>
<feature type="binding site" evidence="1">
    <location>
        <position position="794"/>
    </location>
    <ligand>
        <name>Zn(2+)</name>
        <dbReference type="ChEBI" id="CHEBI:29105"/>
        <label>2</label>
    </ligand>
</feature>
<feature type="binding site" evidence="1">
    <location>
        <position position="867"/>
    </location>
    <ligand>
        <name>Zn(2+)</name>
        <dbReference type="ChEBI" id="CHEBI:29105"/>
        <label>2</label>
    </ligand>
</feature>
<feature type="binding site" evidence="1">
    <location>
        <position position="874"/>
    </location>
    <ligand>
        <name>Zn(2+)</name>
        <dbReference type="ChEBI" id="CHEBI:29105"/>
        <label>2</label>
    </ligand>
</feature>
<feature type="binding site" evidence="1">
    <location>
        <position position="877"/>
    </location>
    <ligand>
        <name>Zn(2+)</name>
        <dbReference type="ChEBI" id="CHEBI:29105"/>
        <label>2</label>
    </ligand>
</feature>
<gene>
    <name evidence="1" type="primary">rpoC</name>
    <name type="ordered locus">Teth39_0367</name>
</gene>
<sequence>MFQLRNFEAIKIGLASPEKIREWSRGEVKKPETINYRTLKPERDGLFCERIFGPTKDWECHCGKYKRVRYKGVVCDRCGVEVTRSKVRRERMGHIELAAPVAHIWYVKGIPSRMGLLLDMSPRALEKVLYFVSYVVIDPGDTPLTKKQLLSEKEYRDYLDKYGNRFRAGMGAEAIKELLQEIDLEKLSKELRAEIRESTGQKRVRAIRRLEVVQAFIDSGNRPEWMILDVIPVIPPDLRPMVQLDGGRFATSDLNDLYRRVINRNNRLKKLLDLGAPDIIVRNEKRMLQEAVDALIDNGRRGRPVTGPGNRPLKSLSDMLKGKQGRFRQNLLGKRVDYSGRSVIVVGPELKVYQCGLPKEMALELFKPFVMKKLVDEGLAQHIKSAKRMVEKVKPEVWDVLEEVIKEHPVLLNRAPTLHRLGIQAFEPVLVEGRAIKLHPLVCTAYNADFDGDQMAVHVPLSMEAQAEARFLMLAANNILKPQDGKPVMTPTQDMVLGCYYLTADEEGVPGEGKYFSSPEEAIMAYQLGYIHIHAKIKVKMTKEIDGVKKSKIIETTVGKIIFNEAIPQDLGYVDRTNPETAFDLEINDLVDKSKLGKILDRVYRLHGPTKTAETLDKIKELGFRYSTKAAITVSVSDMVIPKEKEKLLKEADEMVSKIESQFRRGLISEEERYESVIRTWNMTTEKVTEALMASLDKFNPIFMMAHSGARGSKNQIRQLAGMRGLMADPSGRIIELPIRSNFREGLNVLEFFISTHGARKGLADTALRTADSGYLTRRLVDVSQDVIVREDDCGADEGIYVEEIREGNEIIEKLADRIIGRVAAEDVIDNEGNIIVRRNELINEEEAEKIEKAGITKVRIRSLLTCKSRHGVCRMCYGRDLATGELVNIGEAVGIIAAQAIGEPGTQLTMRTFHTGGVAGADITQGLPRVEELFEARKPKGLAVISEISGVVRINESKKRREVIVTDEENNISKTYLIPYGSRLKVHDGQVIQAGDELTEGSVNPHDLLKIKGIFAVQTYLLQEVQKVYRLQGVEINDKHIEVIIRQMMRKVKVEDPGDTSMLPGELIDMFKFEDENKKAIEKGLRPATGRRALLGITKAALATDSFLSAASFQETTRVLTDAAIKGKVDPLLGLKENVIIGKLIPAGTGLSRYRNISVVKKVNDQQERQDKEKEETEVKASN</sequence>